<keyword id="KW-0028">Amino-acid biosynthesis</keyword>
<keyword id="KW-0963">Cytoplasm</keyword>
<keyword id="KW-0368">Histidine biosynthesis</keyword>
<keyword id="KW-0413">Isomerase</keyword>
<protein>
    <recommendedName>
        <fullName evidence="1">1-(5-phosphoribosyl)-5-[(5-phosphoribosylamino)methylideneamino] imidazole-4-carboxamide isomerase</fullName>
        <ecNumber evidence="1">5.3.1.16</ecNumber>
    </recommendedName>
    <alternativeName>
        <fullName evidence="1">Phosphoribosylformimino-5-aminoimidazole carboxamide ribotide isomerase</fullName>
    </alternativeName>
</protein>
<feature type="chain" id="PRO_0000229081" description="1-(5-phosphoribosyl)-5-[(5-phosphoribosylamino)methylideneamino] imidazole-4-carboxamide isomerase">
    <location>
        <begin position="1"/>
        <end position="245"/>
    </location>
</feature>
<feature type="active site" description="Proton acceptor" evidence="1">
    <location>
        <position position="7"/>
    </location>
</feature>
<feature type="active site" description="Proton donor" evidence="1">
    <location>
        <position position="129"/>
    </location>
</feature>
<sequence length="245" mass="26059">MIIPALDLIDGTVVRLHQGDYGKQRDYGNDPLPRLQDYATQGAEVLHLVDLTGAKDPAKRQIPLIKTLVAGVNVPVQVGGGVRSEEDVAALLEAGVARVVVGSTAVKSPEMVKGWFERFGADALVLALDVRIDEQGNKQVAVSGWQENSGVSLEQLVETYLPIGLKHVLCTDISRDGTLAGSNVSLYEEVCARYPQVAFQSSGGIGDINDVAALRGTGVRGVIVGRALLEGKFTVKEAIACWQNA</sequence>
<reference key="1">
    <citation type="journal article" date="2005" name="Nucleic Acids Res.">
        <title>Genome dynamics and diversity of Shigella species, the etiologic agents of bacillary dysentery.</title>
        <authorList>
            <person name="Yang F."/>
            <person name="Yang J."/>
            <person name="Zhang X."/>
            <person name="Chen L."/>
            <person name="Jiang Y."/>
            <person name="Yan Y."/>
            <person name="Tang X."/>
            <person name="Wang J."/>
            <person name="Xiong Z."/>
            <person name="Dong J."/>
            <person name="Xue Y."/>
            <person name="Zhu Y."/>
            <person name="Xu X."/>
            <person name="Sun L."/>
            <person name="Chen S."/>
            <person name="Nie H."/>
            <person name="Peng J."/>
            <person name="Xu J."/>
            <person name="Wang Y."/>
            <person name="Yuan Z."/>
            <person name="Wen Y."/>
            <person name="Yao Z."/>
            <person name="Shen Y."/>
            <person name="Qiang B."/>
            <person name="Hou Y."/>
            <person name="Yu J."/>
            <person name="Jin Q."/>
        </authorList>
    </citation>
    <scope>NUCLEOTIDE SEQUENCE [LARGE SCALE GENOMIC DNA]</scope>
    <source>
        <strain>Sb227</strain>
    </source>
</reference>
<organism>
    <name type="scientific">Shigella boydii serotype 4 (strain Sb227)</name>
    <dbReference type="NCBI Taxonomy" id="300268"/>
    <lineage>
        <taxon>Bacteria</taxon>
        <taxon>Pseudomonadati</taxon>
        <taxon>Pseudomonadota</taxon>
        <taxon>Gammaproteobacteria</taxon>
        <taxon>Enterobacterales</taxon>
        <taxon>Enterobacteriaceae</taxon>
        <taxon>Shigella</taxon>
    </lineage>
</organism>
<evidence type="ECO:0000255" key="1">
    <source>
        <dbReference type="HAMAP-Rule" id="MF_01014"/>
    </source>
</evidence>
<proteinExistence type="inferred from homology"/>
<name>HIS4_SHIBS</name>
<dbReference type="EC" id="5.3.1.16" evidence="1"/>
<dbReference type="EMBL" id="CP000036">
    <property type="protein sequence ID" value="ABB65520.1"/>
    <property type="molecule type" value="Genomic_DNA"/>
</dbReference>
<dbReference type="RefSeq" id="WP_000586482.1">
    <property type="nucleotide sequence ID" value="NC_007613.1"/>
</dbReference>
<dbReference type="SMR" id="Q323I8"/>
<dbReference type="KEGG" id="sbo:SBO_0850"/>
<dbReference type="HOGENOM" id="CLU_048577_1_2_6"/>
<dbReference type="UniPathway" id="UPA00031">
    <property type="reaction ID" value="UER00009"/>
</dbReference>
<dbReference type="Proteomes" id="UP000007067">
    <property type="component" value="Chromosome"/>
</dbReference>
<dbReference type="GO" id="GO:0005737">
    <property type="term" value="C:cytoplasm"/>
    <property type="evidence" value="ECO:0007669"/>
    <property type="project" value="UniProtKB-SubCell"/>
</dbReference>
<dbReference type="GO" id="GO:0003949">
    <property type="term" value="F:1-(5-phosphoribosyl)-5-[(5-phosphoribosylamino)methylideneamino]imidazole-4-carboxamide isomerase activity"/>
    <property type="evidence" value="ECO:0007669"/>
    <property type="project" value="UniProtKB-UniRule"/>
</dbReference>
<dbReference type="GO" id="GO:0000105">
    <property type="term" value="P:L-histidine biosynthetic process"/>
    <property type="evidence" value="ECO:0007669"/>
    <property type="project" value="UniProtKB-UniRule"/>
</dbReference>
<dbReference type="GO" id="GO:0000162">
    <property type="term" value="P:L-tryptophan biosynthetic process"/>
    <property type="evidence" value="ECO:0007669"/>
    <property type="project" value="TreeGrafter"/>
</dbReference>
<dbReference type="CDD" id="cd04732">
    <property type="entry name" value="HisA"/>
    <property type="match status" value="1"/>
</dbReference>
<dbReference type="FunFam" id="3.20.20.70:FF:000009">
    <property type="entry name" value="1-(5-phosphoribosyl)-5-[(5-phosphoribosylamino)methylideneamino] imidazole-4-carboxamide isomerase"/>
    <property type="match status" value="1"/>
</dbReference>
<dbReference type="Gene3D" id="3.20.20.70">
    <property type="entry name" value="Aldolase class I"/>
    <property type="match status" value="1"/>
</dbReference>
<dbReference type="HAMAP" id="MF_01014">
    <property type="entry name" value="HisA"/>
    <property type="match status" value="1"/>
</dbReference>
<dbReference type="InterPro" id="IPR013785">
    <property type="entry name" value="Aldolase_TIM"/>
</dbReference>
<dbReference type="InterPro" id="IPR006062">
    <property type="entry name" value="His_biosynth"/>
</dbReference>
<dbReference type="InterPro" id="IPR006063">
    <property type="entry name" value="HisA_bact_arch"/>
</dbReference>
<dbReference type="InterPro" id="IPR044524">
    <property type="entry name" value="Isoase_HisA-like"/>
</dbReference>
<dbReference type="InterPro" id="IPR023016">
    <property type="entry name" value="Isoase_HisA-like_bact"/>
</dbReference>
<dbReference type="InterPro" id="IPR011060">
    <property type="entry name" value="RibuloseP-bd_barrel"/>
</dbReference>
<dbReference type="NCBIfam" id="TIGR00007">
    <property type="entry name" value="1-(5-phosphoribosyl)-5-[(5-phosphoribosylamino)methylideneamino]imidazole-4-carboxamide isomerase"/>
    <property type="match status" value="1"/>
</dbReference>
<dbReference type="PANTHER" id="PTHR43090">
    <property type="entry name" value="1-(5-PHOSPHORIBOSYL)-5-[(5-PHOSPHORIBOSYLAMINO)METHYLIDENEAMINO] IMIDAZOLE-4-CARBOXAMIDE ISOMERASE"/>
    <property type="match status" value="1"/>
</dbReference>
<dbReference type="PANTHER" id="PTHR43090:SF2">
    <property type="entry name" value="1-(5-PHOSPHORIBOSYL)-5-[(5-PHOSPHORIBOSYLAMINO)METHYLIDENEAMINO] IMIDAZOLE-4-CARBOXAMIDE ISOMERASE"/>
    <property type="match status" value="1"/>
</dbReference>
<dbReference type="Pfam" id="PF00977">
    <property type="entry name" value="His_biosynth"/>
    <property type="match status" value="1"/>
</dbReference>
<dbReference type="SUPFAM" id="SSF51366">
    <property type="entry name" value="Ribulose-phoshate binding barrel"/>
    <property type="match status" value="1"/>
</dbReference>
<comment type="catalytic activity">
    <reaction evidence="1">
        <text>1-(5-phospho-beta-D-ribosyl)-5-[(5-phospho-beta-D-ribosylamino)methylideneamino]imidazole-4-carboxamide = 5-[(5-phospho-1-deoxy-D-ribulos-1-ylimino)methylamino]-1-(5-phospho-beta-D-ribosyl)imidazole-4-carboxamide</text>
        <dbReference type="Rhea" id="RHEA:15469"/>
        <dbReference type="ChEBI" id="CHEBI:58435"/>
        <dbReference type="ChEBI" id="CHEBI:58525"/>
        <dbReference type="EC" id="5.3.1.16"/>
    </reaction>
</comment>
<comment type="pathway">
    <text evidence="1">Amino-acid biosynthesis; L-histidine biosynthesis; L-histidine from 5-phospho-alpha-D-ribose 1-diphosphate: step 4/9.</text>
</comment>
<comment type="subcellular location">
    <subcellularLocation>
        <location evidence="1">Cytoplasm</location>
    </subcellularLocation>
</comment>
<comment type="similarity">
    <text evidence="1">Belongs to the HisA/HisF family.</text>
</comment>
<accession>Q323I8</accession>
<gene>
    <name evidence="1" type="primary">hisA</name>
    <name type="ordered locus">SBO_0850</name>
</gene>